<gene>
    <name type="primary">PPP1R16B</name>
</gene>
<organism>
    <name type="scientific">Bos taurus</name>
    <name type="common">Bovine</name>
    <dbReference type="NCBI Taxonomy" id="9913"/>
    <lineage>
        <taxon>Eukaryota</taxon>
        <taxon>Metazoa</taxon>
        <taxon>Chordata</taxon>
        <taxon>Craniata</taxon>
        <taxon>Vertebrata</taxon>
        <taxon>Euteleostomi</taxon>
        <taxon>Mammalia</taxon>
        <taxon>Eutheria</taxon>
        <taxon>Laurasiatheria</taxon>
        <taxon>Artiodactyla</taxon>
        <taxon>Ruminantia</taxon>
        <taxon>Pecora</taxon>
        <taxon>Bovidae</taxon>
        <taxon>Bovinae</taxon>
        <taxon>Bos</taxon>
    </lineage>
</organism>
<name>PP16B_BOVIN</name>
<dbReference type="EMBL" id="AF362909">
    <property type="protein sequence ID" value="AAK52795.1"/>
    <property type="molecule type" value="mRNA"/>
</dbReference>
<dbReference type="RefSeq" id="NP_777249.1">
    <property type="nucleotide sequence ID" value="NM_174824.2"/>
</dbReference>
<dbReference type="RefSeq" id="XP_005214553.1">
    <property type="nucleotide sequence ID" value="XM_005214496.5"/>
</dbReference>
<dbReference type="RefSeq" id="XP_059748380.1">
    <property type="nucleotide sequence ID" value="XM_059892397.1"/>
</dbReference>
<dbReference type="SMR" id="Q95N27"/>
<dbReference type="FunCoup" id="Q95N27">
    <property type="interactions" value="1343"/>
</dbReference>
<dbReference type="STRING" id="9913.ENSBTAP00000000858"/>
<dbReference type="iPTMnet" id="Q95N27"/>
<dbReference type="PaxDb" id="9913-ENSBTAP00000000858"/>
<dbReference type="Ensembl" id="ENSBTAT00000000858.6">
    <property type="protein sequence ID" value="ENSBTAP00000000858.4"/>
    <property type="gene ID" value="ENSBTAG00000000653.6"/>
</dbReference>
<dbReference type="GeneID" id="282091"/>
<dbReference type="KEGG" id="bta:282091"/>
<dbReference type="CTD" id="26051"/>
<dbReference type="VEuPathDB" id="HostDB:ENSBTAG00000000653"/>
<dbReference type="VGNC" id="VGNC:33231">
    <property type="gene designation" value="PPP1R16B"/>
</dbReference>
<dbReference type="eggNOG" id="KOG0505">
    <property type="taxonomic scope" value="Eukaryota"/>
</dbReference>
<dbReference type="GeneTree" id="ENSGT00940000154090"/>
<dbReference type="HOGENOM" id="CLU_000134_54_2_1"/>
<dbReference type="InParanoid" id="Q95N27"/>
<dbReference type="OMA" id="MVWQQLG"/>
<dbReference type="OrthoDB" id="19014at2759"/>
<dbReference type="TreeFam" id="TF316803"/>
<dbReference type="Proteomes" id="UP000009136">
    <property type="component" value="Chromosome 13"/>
</dbReference>
<dbReference type="Bgee" id="ENSBTAG00000000653">
    <property type="expression patterns" value="Expressed in prefrontal cortex and 101 other cell types or tissues"/>
</dbReference>
<dbReference type="GO" id="GO:0042995">
    <property type="term" value="C:cell projection"/>
    <property type="evidence" value="ECO:0007669"/>
    <property type="project" value="UniProtKB-SubCell"/>
</dbReference>
<dbReference type="GO" id="GO:0005737">
    <property type="term" value="C:cytoplasm"/>
    <property type="evidence" value="ECO:0000318"/>
    <property type="project" value="GO_Central"/>
</dbReference>
<dbReference type="GO" id="GO:0016607">
    <property type="term" value="C:nuclear speck"/>
    <property type="evidence" value="ECO:0007669"/>
    <property type="project" value="Ensembl"/>
</dbReference>
<dbReference type="GO" id="GO:0005634">
    <property type="term" value="C:nucleus"/>
    <property type="evidence" value="ECO:0000250"/>
    <property type="project" value="UniProtKB"/>
</dbReference>
<dbReference type="GO" id="GO:0048471">
    <property type="term" value="C:perinuclear region of cytoplasm"/>
    <property type="evidence" value="ECO:0000250"/>
    <property type="project" value="UniProtKB"/>
</dbReference>
<dbReference type="GO" id="GO:0005886">
    <property type="term" value="C:plasma membrane"/>
    <property type="evidence" value="ECO:0000250"/>
    <property type="project" value="UniProtKB"/>
</dbReference>
<dbReference type="GO" id="GO:0004857">
    <property type="term" value="F:enzyme inhibitor activity"/>
    <property type="evidence" value="ECO:0000318"/>
    <property type="project" value="GO_Central"/>
</dbReference>
<dbReference type="GO" id="GO:0017020">
    <property type="term" value="F:myosin phosphatase regulator activity"/>
    <property type="evidence" value="ECO:0000318"/>
    <property type="project" value="GO_Central"/>
</dbReference>
<dbReference type="GO" id="GO:0061028">
    <property type="term" value="P:establishment of endothelial barrier"/>
    <property type="evidence" value="ECO:0000318"/>
    <property type="project" value="GO_Central"/>
</dbReference>
<dbReference type="GO" id="GO:1903589">
    <property type="term" value="P:positive regulation of blood vessel endothelial cell proliferation involved in sprouting angiogenesis"/>
    <property type="evidence" value="ECO:0007669"/>
    <property type="project" value="Ensembl"/>
</dbReference>
<dbReference type="GO" id="GO:0051489">
    <property type="term" value="P:regulation of filopodium assembly"/>
    <property type="evidence" value="ECO:0000315"/>
    <property type="project" value="UniProtKB"/>
</dbReference>
<dbReference type="GO" id="GO:0051896">
    <property type="term" value="P:regulation of phosphatidylinositol 3-kinase/protein kinase B signal transduction"/>
    <property type="evidence" value="ECO:0000318"/>
    <property type="project" value="GO_Central"/>
</dbReference>
<dbReference type="GO" id="GO:1903670">
    <property type="term" value="P:regulation of sprouting angiogenesis"/>
    <property type="evidence" value="ECO:0000315"/>
    <property type="project" value="UniProtKB"/>
</dbReference>
<dbReference type="FunFam" id="1.25.40.20:FF:000105">
    <property type="entry name" value="protein phosphatase 1 regulatory inhibitor subunit 16B"/>
    <property type="match status" value="1"/>
</dbReference>
<dbReference type="FunFam" id="1.25.40.20:FF:000079">
    <property type="entry name" value="Protein phosphatase 1 regulatory subunit 16B"/>
    <property type="match status" value="1"/>
</dbReference>
<dbReference type="Gene3D" id="1.25.40.20">
    <property type="entry name" value="Ankyrin repeat-containing domain"/>
    <property type="match status" value="2"/>
</dbReference>
<dbReference type="InterPro" id="IPR002110">
    <property type="entry name" value="Ankyrin_rpt"/>
</dbReference>
<dbReference type="InterPro" id="IPR036770">
    <property type="entry name" value="Ankyrin_rpt-contain_sf"/>
</dbReference>
<dbReference type="InterPro" id="IPR017417">
    <property type="entry name" value="Pase-1_reg_su_16AB"/>
</dbReference>
<dbReference type="InterPro" id="IPR051226">
    <property type="entry name" value="PP1_Regulatory_Subunit"/>
</dbReference>
<dbReference type="PANTHER" id="PTHR24179:SF31">
    <property type="entry name" value="PROTEIN PHOSPHATASE 1 REGULATORY INHIBITOR SUBUNIT 16B"/>
    <property type="match status" value="1"/>
</dbReference>
<dbReference type="PANTHER" id="PTHR24179">
    <property type="entry name" value="PROTEIN PHOSPHATASE 1 REGULATORY SUBUNIT 12"/>
    <property type="match status" value="1"/>
</dbReference>
<dbReference type="Pfam" id="PF12796">
    <property type="entry name" value="Ank_2"/>
    <property type="match status" value="2"/>
</dbReference>
<dbReference type="PIRSF" id="PIRSF038159">
    <property type="entry name" value="PP1_16AB_vert"/>
    <property type="match status" value="1"/>
</dbReference>
<dbReference type="SMART" id="SM00248">
    <property type="entry name" value="ANK"/>
    <property type="match status" value="5"/>
</dbReference>
<dbReference type="SUPFAM" id="SSF48403">
    <property type="entry name" value="Ankyrin repeat"/>
    <property type="match status" value="1"/>
</dbReference>
<dbReference type="PROSITE" id="PS50297">
    <property type="entry name" value="ANK_REP_REGION"/>
    <property type="match status" value="1"/>
</dbReference>
<dbReference type="PROSITE" id="PS50088">
    <property type="entry name" value="ANK_REPEAT"/>
    <property type="match status" value="4"/>
</dbReference>
<reference key="1">
    <citation type="journal article" date="2002" name="Am. J. Physiol.">
        <title>TIMAP, a novel CAAX box protein regulated by TGF-beta1 and expressed in endothelial cells.</title>
        <authorList>
            <person name="Cao W."/>
            <person name="Mattagajasingh S.N."/>
            <person name="Xu H."/>
            <person name="Kim K."/>
            <person name="Fierlbeck W."/>
            <person name="Deng J."/>
            <person name="Lowenstein C.J."/>
            <person name="Ballermann B.J."/>
        </authorList>
    </citation>
    <scope>NUCLEOTIDE SEQUENCE [MRNA]</scope>
    <scope>INDUCTION BY TGFB1</scope>
    <scope>SUBCELLULAR LOCATION</scope>
</reference>
<reference key="2">
    <citation type="journal article" date="2007" name="J. Biol. Chem.">
        <title>Phosphorylation of TIMAP by glycogen synthase kinase-3beta activates its associated protein phosphatase 1.</title>
        <authorList>
            <person name="Li L."/>
            <person name="Kozlowski K."/>
            <person name="Wegner B."/>
            <person name="Rashid T."/>
            <person name="Yeung T."/>
            <person name="Holmes C."/>
            <person name="Ballermann B.J."/>
        </authorList>
    </citation>
    <scope>FUNCTION</scope>
    <scope>PHOSPHORYLATION AT SER-333 AND SER-337</scope>
    <scope>MUTAGENESIS OF VAL-64; PHE-66; SER-333 AND SER-337</scope>
</reference>
<reference key="3">
    <citation type="journal article" date="2011" name="Respir. Physiol. Neurobiol.">
        <title>TIMAP protects endothelial barrier from LPS-induced vascular leakage and is down-regulated by LPS.</title>
        <authorList>
            <person name="Poirier C."/>
            <person name="Gorshkov B.A."/>
            <person name="Zemskova M.A."/>
            <person name="Bogatcheva N.V."/>
            <person name="Verin A.D."/>
        </authorList>
    </citation>
    <scope>INDUCTION BY LPS</scope>
</reference>
<reference key="4">
    <citation type="journal article" date="2016" name="Int. J. Biochem. Cell Biol.">
        <title>TIMAP-protein phosphatase 1-complex controls endothelin-1 production via ECE-1 dephosphorylation.</title>
        <authorList>
            <person name="Boratko A."/>
            <person name="Vereb Z."/>
            <person name="Petrovski G."/>
            <person name="Csortos C."/>
        </authorList>
    </citation>
    <scope>FUNCTION</scope>
    <scope>INTERACTION WITH ECE1</scope>
</reference>
<proteinExistence type="evidence at protein level"/>
<feature type="chain" id="PRO_0000067042" description="Protein phosphatase 1 regulatory inhibitor subunit 16B">
    <location>
        <begin position="1"/>
        <end position="565"/>
    </location>
</feature>
<feature type="propeptide" id="PRO_0000396709" description="Removed in mature form" evidence="4">
    <location>
        <begin position="566"/>
        <end position="568"/>
    </location>
</feature>
<feature type="repeat" description="ANK 1">
    <location>
        <begin position="100"/>
        <end position="129"/>
    </location>
</feature>
<feature type="repeat" description="ANK 2">
    <location>
        <begin position="133"/>
        <end position="162"/>
    </location>
</feature>
<feature type="repeat" description="ANK 3">
    <location>
        <begin position="228"/>
        <end position="257"/>
    </location>
</feature>
<feature type="repeat" description="ANK 4">
    <location>
        <begin position="261"/>
        <end position="290"/>
    </location>
</feature>
<feature type="repeat" description="ANK 5">
    <location>
        <begin position="531"/>
        <end position="560"/>
    </location>
</feature>
<feature type="region of interest" description="Disordered" evidence="5">
    <location>
        <begin position="327"/>
        <end position="346"/>
    </location>
</feature>
<feature type="region of interest" description="Disordered" evidence="5">
    <location>
        <begin position="373"/>
        <end position="404"/>
    </location>
</feature>
<feature type="region of interest" description="Disordered" evidence="5">
    <location>
        <begin position="504"/>
        <end position="525"/>
    </location>
</feature>
<feature type="coiled-coil region" evidence="4">
    <location>
        <begin position="15"/>
        <end position="55"/>
    </location>
</feature>
<feature type="compositionally biased region" description="Low complexity" evidence="5">
    <location>
        <begin position="333"/>
        <end position="342"/>
    </location>
</feature>
<feature type="compositionally biased region" description="Basic and acidic residues" evidence="5">
    <location>
        <begin position="386"/>
        <end position="404"/>
    </location>
</feature>
<feature type="modified residue" description="Phosphoserine" evidence="1">
    <location>
        <position position="69"/>
    </location>
</feature>
<feature type="modified residue" description="Phosphoserine" evidence="11">
    <location>
        <position position="333"/>
    </location>
</feature>
<feature type="modified residue" description="Phosphoserine" evidence="11">
    <location>
        <position position="337"/>
    </location>
</feature>
<feature type="modified residue" description="Phosphoserine" evidence="3">
    <location>
        <position position="350"/>
    </location>
</feature>
<feature type="modified residue" description="Phosphoserine" evidence="3">
    <location>
        <position position="477"/>
    </location>
</feature>
<feature type="modified residue" description="Cysteine methyl ester" evidence="2">
    <location>
        <position position="565"/>
    </location>
</feature>
<feature type="lipid moiety-binding region" description="S-palmitoyl cysteine" evidence="2">
    <location>
        <position position="564"/>
    </location>
</feature>
<feature type="lipid moiety-binding region" description="S-farnesyl cysteine" evidence="2">
    <location>
        <position position="565"/>
    </location>
</feature>
<feature type="mutagenesis site" description="Hyperphosphorylation, loss of PPP1CA-binding and PP1C phosphatase activity; when associated with A-66." evidence="7">
    <original>V</original>
    <variation>A</variation>
    <location>
        <position position="64"/>
    </location>
</feature>
<feature type="mutagenesis site" description="Hyperphosphorylation, loss of PPP1CA-binding and PP1C phosphatase activity; when associated with A-64." evidence="7">
    <original>F</original>
    <variation>A</variation>
    <location>
        <position position="66"/>
    </location>
</feature>
<feature type="mutagenesis site" description="Loss of GSK3B-mediated phosphorylation but no effect on PKA-mediated phosphorylation. Loss of GSK3B-mediated phosphorylation but no effect on PKA-mediated phosphorylation; when associated with A-337." evidence="7">
    <original>S</original>
    <variation>A</variation>
    <location>
        <position position="333"/>
    </location>
</feature>
<feature type="mutagenesis site" description="Loss of GSK3B-mediated phosphorylation but no effect on PKA-mediated phosphorylation. Loss of GSK3B-mediated phosphorylation but no effect on PKA-mediated phosphorylation; when associated with A-333." evidence="7">
    <original>S</original>
    <variation>A</variation>
    <location>
        <position position="337"/>
    </location>
</feature>
<accession>Q95N27</accession>
<comment type="function">
    <text evidence="3 7 9">Regulator of protein phosphatase 1 (PP1) that acts as a positive regulator of pulmonary endothelial cell (EC) barrier function. Protects the endothelial barrier from lipopolysaccharide (LPS)-induced vascular leakage (By similarity). Involved in the regulation of the PI3K/AKT signaling pathway (By similarity). Involved in the regulation of angiogenesis and endothelial cell proliferation through the control of ECE1 dephosphorylation, trafficking and activity (PubMed:26806547). Involved in the regulation of endothelial cell filopodia extension (PubMed:17609201). May be a downstream target for TGF-beta1 signaling cascade in endothelial cells (By similarity). Involved in PKA-mediated moesin dephosphorylation which is important in EC barrier protection against thrombin stimulation. Promotes the interaction of PPP1CA with RPSA/LAMR1 and in turn facilitates the dephosphorylation of RPSA/LAMR1 (By similarity). Involved in the dephosphorylation of EEF1A1 (By similarity).</text>
</comment>
<comment type="subunit">
    <text evidence="3 9">Interacts with PPP1CA, PPP1CB and MSN. Interacts (via its fourth ankyrin repeat) with the mature dimeric form of RPSA/LAMR1. Interacts with EEF1A1 (By similarity). Interacts with PTEN (By similarity). Interacts with ECE1 (PubMed:26806547).</text>
</comment>
<comment type="subcellular location">
    <subcellularLocation>
        <location evidence="6">Cell membrane</location>
    </subcellularLocation>
    <subcellularLocation>
        <location evidence="10">Cell membrane</location>
        <topology evidence="10">Lipid-anchor</topology>
    </subcellularLocation>
    <subcellularLocation>
        <location evidence="3">Nucleus</location>
    </subcellularLocation>
    <subcellularLocation>
        <location evidence="3">Cell projection</location>
    </subcellularLocation>
    <text evidence="3 6">Colocalizes with RPSA/LAMR1 in the cell membrane (By similarity). Localizes to the perinuclear region (PubMed:12055102). Colocalizes with PTEN at the tip of EC projections (By similarity).</text>
</comment>
<comment type="induction">
    <text evidence="6 8">Inhibited by TGF-beta1 (PubMed:12055102). Down-regulated by LPS (PubMed:21907835).</text>
</comment>
<comment type="PTM">
    <text evidence="7">Phosphorylated by PKA and, after PKA priming, by GSK3B. Phosphorylation by GSK3B reduces its association with PP1C and enhances PP1C activity. Dephosphorylation by its associated PP1C results in enhanced association with PP1C, but reduced PP1C activity.</text>
</comment>
<sequence>MASHVDLLTELQLLEKVPTLERLRAAQKRRAQQLKKWAQYEQDLQHRKRKHERKRSTGGRRKKVSFEASVALLEASLRNDAEEVRYFLKNKVSPDLCNEDGLTALHQCCIDNFEEIVKLLLSHGANVNAKDNELWTPLHAAATCGHINLVKILVQYGADLLAVNSDGNMPYDLCEDEPTLDVIETCMAYQGITQEKINEMRAAPEQQMISDIHCMIAAGQDLDWVDAQGATLLHIAGANGYLRAAELLLDHGVRVDVKDWDGWEPLHAAAFWGQMQMAELLVSHGASLSARTSMDEMPIDLCEEEEFKVLLLELKHKHDVIMKSQLRHKSSLSRRTSSAGSRGKVVRRASLSDRTNLYRKEYEGEAILWQQRSASEDQRNSTYNGDIRETRTDQENKDPNPRLEKPVLLSEFPTKIPHSDMDMPVENGLRAPVSTYQYALCNGDVWKVHEVPDYSMAYGNPGVADATPSWSGYKEQSPQTLLELKRQRAAAKLLSHPFLSTHLGSGVSRTGEGSSEGKAPLIGGRTSPYSSNGTSVYYTVTSGDPPLLKFKAPIEEMEEKVHGCCRIS</sequence>
<keyword id="KW-0040">ANK repeat</keyword>
<keyword id="KW-1003">Cell membrane</keyword>
<keyword id="KW-0966">Cell projection</keyword>
<keyword id="KW-0175">Coiled coil</keyword>
<keyword id="KW-0449">Lipoprotein</keyword>
<keyword id="KW-0472">Membrane</keyword>
<keyword id="KW-0488">Methylation</keyword>
<keyword id="KW-0539">Nucleus</keyword>
<keyword id="KW-0564">Palmitate</keyword>
<keyword id="KW-0597">Phosphoprotein</keyword>
<keyword id="KW-0636">Prenylation</keyword>
<keyword id="KW-1185">Reference proteome</keyword>
<keyword id="KW-0677">Repeat</keyword>
<protein>
    <recommendedName>
        <fullName>Protein phosphatase 1 regulatory inhibitor subunit 16B</fullName>
    </recommendedName>
    <alternativeName>
        <fullName>CAAX box protein TIMAP</fullName>
    </alternativeName>
    <alternativeName>
        <fullName>TGF-beta-inhibited membrane-associated protein</fullName>
        <shortName>bTIMAP</shortName>
    </alternativeName>
</protein>
<evidence type="ECO:0000250" key="1">
    <source>
        <dbReference type="UniProtKB" id="Q8VHQ3"/>
    </source>
</evidence>
<evidence type="ECO:0000250" key="2">
    <source>
        <dbReference type="UniProtKB" id="Q923M0"/>
    </source>
</evidence>
<evidence type="ECO:0000250" key="3">
    <source>
        <dbReference type="UniProtKB" id="Q96T49"/>
    </source>
</evidence>
<evidence type="ECO:0000255" key="4"/>
<evidence type="ECO:0000256" key="5">
    <source>
        <dbReference type="SAM" id="MobiDB-lite"/>
    </source>
</evidence>
<evidence type="ECO:0000269" key="6">
    <source>
    </source>
</evidence>
<evidence type="ECO:0000269" key="7">
    <source>
    </source>
</evidence>
<evidence type="ECO:0000269" key="8">
    <source>
    </source>
</evidence>
<evidence type="ECO:0000269" key="9">
    <source>
    </source>
</evidence>
<evidence type="ECO:0000305" key="10"/>
<evidence type="ECO:0000305" key="11">
    <source>
    </source>
</evidence>